<gene>
    <name type="ordered locus">PA2953</name>
</gene>
<organism>
    <name type="scientific">Pseudomonas aeruginosa (strain ATCC 15692 / DSM 22644 / CIP 104116 / JCM 14847 / LMG 12228 / 1C / PRS 101 / PAO1)</name>
    <dbReference type="NCBI Taxonomy" id="208964"/>
    <lineage>
        <taxon>Bacteria</taxon>
        <taxon>Pseudomonadati</taxon>
        <taxon>Pseudomonadota</taxon>
        <taxon>Gammaproteobacteria</taxon>
        <taxon>Pseudomonadales</taxon>
        <taxon>Pseudomonadaceae</taxon>
        <taxon>Pseudomonas</taxon>
    </lineage>
</organism>
<evidence type="ECO:0000250" key="1">
    <source>
        <dbReference type="UniProtKB" id="Q16134"/>
    </source>
</evidence>
<evidence type="ECO:0000255" key="2"/>
<evidence type="ECO:0000255" key="3">
    <source>
        <dbReference type="PROSITE-ProRule" id="PRU00711"/>
    </source>
</evidence>
<evidence type="ECO:0000305" key="4"/>
<name>ETFD_PSEAE</name>
<protein>
    <recommendedName>
        <fullName>Electron transfer flavoprotein-ubiquinone oxidoreductase</fullName>
        <shortName>ETF-QO</shortName>
        <shortName>ETF-ubiquinone oxidoreductase</shortName>
        <ecNumber>1.5.5.1</ecNumber>
    </recommendedName>
    <alternativeName>
        <fullName>Electron-transferring-flavoprotein dehydrogenase</fullName>
        <shortName>ETF dehydrogenase</shortName>
    </alternativeName>
</protein>
<keyword id="KW-0004">4Fe-4S</keyword>
<keyword id="KW-0903">Direct protein sequencing</keyword>
<keyword id="KW-0249">Electron transport</keyword>
<keyword id="KW-0274">FAD</keyword>
<keyword id="KW-0285">Flavoprotein</keyword>
<keyword id="KW-0408">Iron</keyword>
<keyword id="KW-0411">Iron-sulfur</keyword>
<keyword id="KW-0479">Metal-binding</keyword>
<keyword id="KW-0560">Oxidoreductase</keyword>
<keyword id="KW-1185">Reference proteome</keyword>
<keyword id="KW-0813">Transport</keyword>
<keyword id="KW-0830">Ubiquinone</keyword>
<accession>Q9HZP5</accession>
<comment type="function">
    <text evidence="1">Accepts electrons from ETF and reduces ubiquinone.</text>
</comment>
<comment type="catalytic activity">
    <reaction evidence="1">
        <text>a ubiquinone + reduced [electron-transfer flavoprotein] = a ubiquinol + oxidized [electron-transfer flavoprotein] + H(+)</text>
        <dbReference type="Rhea" id="RHEA:24052"/>
        <dbReference type="Rhea" id="RHEA-COMP:9565"/>
        <dbReference type="Rhea" id="RHEA-COMP:9566"/>
        <dbReference type="Rhea" id="RHEA-COMP:10685"/>
        <dbReference type="Rhea" id="RHEA-COMP:10686"/>
        <dbReference type="ChEBI" id="CHEBI:15378"/>
        <dbReference type="ChEBI" id="CHEBI:16389"/>
        <dbReference type="ChEBI" id="CHEBI:17976"/>
        <dbReference type="ChEBI" id="CHEBI:57692"/>
        <dbReference type="ChEBI" id="CHEBI:58307"/>
        <dbReference type="EC" id="1.5.5.1"/>
    </reaction>
</comment>
<comment type="cofactor">
    <cofactor evidence="1">
        <name>[4Fe-4S] cluster</name>
        <dbReference type="ChEBI" id="CHEBI:49883"/>
    </cofactor>
    <text evidence="1">Binds 1 [4Fe-4S] cluster.</text>
</comment>
<comment type="cofactor">
    <cofactor evidence="1">
        <name>FAD</name>
        <dbReference type="ChEBI" id="CHEBI:57692"/>
    </cofactor>
</comment>
<comment type="similarity">
    <text evidence="4">Belongs to the ETF-QO/FixC family.</text>
</comment>
<proteinExistence type="evidence at protein level"/>
<dbReference type="EC" id="1.5.5.1"/>
<dbReference type="EMBL" id="AE004091">
    <property type="protein sequence ID" value="AAG06341.1"/>
    <property type="molecule type" value="Genomic_DNA"/>
</dbReference>
<dbReference type="PIR" id="D83277">
    <property type="entry name" value="D83277"/>
</dbReference>
<dbReference type="RefSeq" id="NP_251643.1">
    <property type="nucleotide sequence ID" value="NC_002516.2"/>
</dbReference>
<dbReference type="RefSeq" id="WP_003102932.1">
    <property type="nucleotide sequence ID" value="NZ_QZGE01000009.1"/>
</dbReference>
<dbReference type="SMR" id="Q9HZP5"/>
<dbReference type="FunCoup" id="Q9HZP5">
    <property type="interactions" value="735"/>
</dbReference>
<dbReference type="STRING" id="208964.PA2953"/>
<dbReference type="PaxDb" id="208964-PA2953"/>
<dbReference type="GeneID" id="880159"/>
<dbReference type="KEGG" id="pae:PA2953"/>
<dbReference type="PATRIC" id="fig|208964.12.peg.3099"/>
<dbReference type="PseudoCAP" id="PA2953"/>
<dbReference type="HOGENOM" id="CLU_009667_4_1_6"/>
<dbReference type="InParanoid" id="Q9HZP5"/>
<dbReference type="OrthoDB" id="9766632at2"/>
<dbReference type="PhylomeDB" id="Q9HZP5"/>
<dbReference type="BioCyc" id="PAER208964:G1FZ6-3004-MONOMER"/>
<dbReference type="Proteomes" id="UP000002438">
    <property type="component" value="Chromosome"/>
</dbReference>
<dbReference type="GO" id="GO:0051539">
    <property type="term" value="F:4 iron, 4 sulfur cluster binding"/>
    <property type="evidence" value="ECO:0007669"/>
    <property type="project" value="UniProtKB-KW"/>
</dbReference>
<dbReference type="GO" id="GO:0004174">
    <property type="term" value="F:electron-transferring-flavoprotein dehydrogenase activity"/>
    <property type="evidence" value="ECO:0000318"/>
    <property type="project" value="GO_Central"/>
</dbReference>
<dbReference type="GO" id="GO:0046872">
    <property type="term" value="F:metal ion binding"/>
    <property type="evidence" value="ECO:0007669"/>
    <property type="project" value="UniProtKB-KW"/>
</dbReference>
<dbReference type="GO" id="GO:0022900">
    <property type="term" value="P:electron transport chain"/>
    <property type="evidence" value="ECO:0000318"/>
    <property type="project" value="GO_Central"/>
</dbReference>
<dbReference type="FunFam" id="3.30.70.20:FF:000012">
    <property type="entry name" value="Electron transfer flavoprotein-ubiquinone oxidoreductase, mitochondrial"/>
    <property type="match status" value="1"/>
</dbReference>
<dbReference type="Gene3D" id="3.30.70.20">
    <property type="match status" value="1"/>
</dbReference>
<dbReference type="Gene3D" id="3.30.9.90">
    <property type="match status" value="1"/>
</dbReference>
<dbReference type="Gene3D" id="3.50.50.60">
    <property type="entry name" value="FAD/NAD(P)-binding domain"/>
    <property type="match status" value="1"/>
</dbReference>
<dbReference type="InterPro" id="IPR017896">
    <property type="entry name" value="4Fe4S_Fe-S-bd"/>
</dbReference>
<dbReference type="InterPro" id="IPR040156">
    <property type="entry name" value="ETF-QO"/>
</dbReference>
<dbReference type="InterPro" id="IPR049398">
    <property type="entry name" value="ETF-QO/FixC_UQ-bd"/>
</dbReference>
<dbReference type="InterPro" id="IPR007859">
    <property type="entry name" value="ETF-QO/FixX_C"/>
</dbReference>
<dbReference type="InterPro" id="IPR036188">
    <property type="entry name" value="FAD/NAD-bd_sf"/>
</dbReference>
<dbReference type="PANTHER" id="PTHR10617">
    <property type="entry name" value="ELECTRON TRANSFER FLAVOPROTEIN-UBIQUINONE OXIDOREDUCTASE"/>
    <property type="match status" value="1"/>
</dbReference>
<dbReference type="PANTHER" id="PTHR10617:SF107">
    <property type="entry name" value="ELECTRON TRANSFER FLAVOPROTEIN-UBIQUINONE OXIDOREDUCTASE, MITOCHONDRIAL"/>
    <property type="match status" value="1"/>
</dbReference>
<dbReference type="Pfam" id="PF21162">
    <property type="entry name" value="ETFQO_UQ-bd"/>
    <property type="match status" value="1"/>
</dbReference>
<dbReference type="Pfam" id="PF05187">
    <property type="entry name" value="Fer4_ETF_QO"/>
    <property type="match status" value="1"/>
</dbReference>
<dbReference type="Pfam" id="PF13450">
    <property type="entry name" value="NAD_binding_8"/>
    <property type="match status" value="1"/>
</dbReference>
<dbReference type="PRINTS" id="PR00420">
    <property type="entry name" value="RNGMNOXGNASE"/>
</dbReference>
<dbReference type="SUPFAM" id="SSF54862">
    <property type="entry name" value="4Fe-4S ferredoxins"/>
    <property type="match status" value="1"/>
</dbReference>
<dbReference type="SUPFAM" id="SSF54373">
    <property type="entry name" value="FAD-linked reductases, C-terminal domain"/>
    <property type="match status" value="1"/>
</dbReference>
<dbReference type="SUPFAM" id="SSF51905">
    <property type="entry name" value="FAD/NAD(P)-binding domain"/>
    <property type="match status" value="1"/>
</dbReference>
<dbReference type="PROSITE" id="PS51379">
    <property type="entry name" value="4FE4S_FER_2"/>
    <property type="match status" value="1"/>
</dbReference>
<reference key="1">
    <citation type="journal article" date="2000" name="Nature">
        <title>Complete genome sequence of Pseudomonas aeruginosa PAO1, an opportunistic pathogen.</title>
        <authorList>
            <person name="Stover C.K."/>
            <person name="Pham X.-Q.T."/>
            <person name="Erwin A.L."/>
            <person name="Mizoguchi S.D."/>
            <person name="Warrener P."/>
            <person name="Hickey M.J."/>
            <person name="Brinkman F.S.L."/>
            <person name="Hufnagle W.O."/>
            <person name="Kowalik D.J."/>
            <person name="Lagrou M."/>
            <person name="Garber R.L."/>
            <person name="Goltry L."/>
            <person name="Tolentino E."/>
            <person name="Westbrock-Wadman S."/>
            <person name="Yuan Y."/>
            <person name="Brody L.L."/>
            <person name="Coulter S.N."/>
            <person name="Folger K.R."/>
            <person name="Kas A."/>
            <person name="Larbig K."/>
            <person name="Lim R.M."/>
            <person name="Smith K.A."/>
            <person name="Spencer D.H."/>
            <person name="Wong G.K.-S."/>
            <person name="Wu Z."/>
            <person name="Paulsen I.T."/>
            <person name="Reizer J."/>
            <person name="Saier M.H. Jr."/>
            <person name="Hancock R.E.W."/>
            <person name="Lory S."/>
            <person name="Olson M.V."/>
        </authorList>
    </citation>
    <scope>NUCLEOTIDE SEQUENCE [LARGE SCALE GENOMIC DNA]</scope>
    <source>
        <strain>ATCC 15692 / DSM 22644 / CIP 104116 / JCM 14847 / LMG 12228 / 1C / PRS 101 / PAO1</strain>
    </source>
</reference>
<reference evidence="4" key="2">
    <citation type="thesis" date="2005" institute="Ben-Gurion University" country="Israel">
        <title>Biofouling in water treatment systems: effect of membrane properties on biofilm formation.</title>
        <authorList>
            <person name="Liddor M."/>
        </authorList>
    </citation>
    <scope>PROTEIN SEQUENCE OF 62-90 AND 363-376</scope>
    <source>
        <strain>ATCC 33467 / type 1 smooth</strain>
        <strain>ATCC 33468 / type 2 mucoid</strain>
    </source>
</reference>
<feature type="chain" id="PRO_0000200683" description="Electron transfer flavoprotein-ubiquinone oxidoreductase">
    <location>
        <begin position="1"/>
        <end position="551"/>
    </location>
</feature>
<feature type="domain" description="4Fe-4S ferredoxin-type" evidence="3">
    <location>
        <begin position="511"/>
        <end position="540"/>
    </location>
</feature>
<feature type="binding site" evidence="2">
    <location>
        <begin position="10"/>
        <end position="24"/>
    </location>
    <ligand>
        <name>FAD</name>
        <dbReference type="ChEBI" id="CHEBI:57692"/>
    </ligand>
</feature>
<feature type="binding site" evidence="1 2">
    <location>
        <position position="496"/>
    </location>
    <ligand>
        <name>[4Fe-4S] cluster</name>
        <dbReference type="ChEBI" id="CHEBI:49883"/>
    </ligand>
</feature>
<feature type="binding site" evidence="1 2">
    <location>
        <position position="520"/>
    </location>
    <ligand>
        <name>[4Fe-4S] cluster</name>
        <dbReference type="ChEBI" id="CHEBI:49883"/>
    </ligand>
</feature>
<feature type="binding site" evidence="1 2">
    <location>
        <position position="523"/>
    </location>
    <ligand>
        <name>[4Fe-4S] cluster</name>
        <dbReference type="ChEBI" id="CHEBI:49883"/>
    </ligand>
</feature>
<feature type="binding site" evidence="1 2">
    <location>
        <position position="526"/>
    </location>
    <ligand>
        <name>[4Fe-4S] cluster</name>
        <dbReference type="ChEBI" id="CHEBI:49883"/>
    </ligand>
</feature>
<sequence>MEREYMEFDVVIVGAGPAGLSAACRLKQKAAEAGQEISVCVVEKGSEVGAHILSGAVFEPRALNELFPDWKELGAPLNTPVTGDDIYVLKSAESATKVPNFFVPKTMHNEGNYIISLGNLCRWLAQQAEGLGVEIYPGFAAQEALIDENGVVRGIVTGDLGVDREGNPKEGYYTPGMELRAKYTLFAEGCRGHIGKQLIKKYNLDSEADAQHYGIGIKEIWDIDPSKHKPGLVVHTAGWPLNDENTGGSFLYHLENNQVFVGLIIDLSYSNPHLSPFDEFQRYKHHPVVKQYLEGGKRVAYGARAICKGGLNSLPKMVFPGGALIGCDLGTLNFAKIKGSHTAMKSGMLAADAIAEALAAGREGGDELSSYVDAFKASWLYDELFRSRNFGAAIHKFGAIGGGAFNFIDQNIFGGKIPVTLHDDKPDYACLKKASEAPKIDYPKPDGKLSFDKLSSVFLSNTNHEEDQPIHLKLADASIPIEKNLPLYDEPAQRYCPAGVYEVVANDDGSKRFQINAQNCVHCKTCDIKDPAQNITWVAPEGTGGPNYPNM</sequence>